<protein>
    <recommendedName>
        <fullName evidence="1">Large-conductance mechanosensitive channel</fullName>
    </recommendedName>
</protein>
<gene>
    <name evidence="1" type="primary">mscL</name>
    <name type="ordered locus">BP0278</name>
</gene>
<dbReference type="EMBL" id="BX640411">
    <property type="protein sequence ID" value="CAE40657.1"/>
    <property type="molecule type" value="Genomic_DNA"/>
</dbReference>
<dbReference type="RefSeq" id="NP_879158.1">
    <property type="nucleotide sequence ID" value="NC_002929.2"/>
</dbReference>
<dbReference type="RefSeq" id="WP_010929721.1">
    <property type="nucleotide sequence ID" value="NZ_CP039022.1"/>
</dbReference>
<dbReference type="SMR" id="Q7W079"/>
<dbReference type="STRING" id="257313.BP0278"/>
<dbReference type="PaxDb" id="257313-BP0278"/>
<dbReference type="GeneID" id="69603468"/>
<dbReference type="KEGG" id="bpe:BP0278"/>
<dbReference type="PATRIC" id="fig|257313.5.peg.300"/>
<dbReference type="eggNOG" id="COG1970">
    <property type="taxonomic scope" value="Bacteria"/>
</dbReference>
<dbReference type="HOGENOM" id="CLU_095787_0_1_4"/>
<dbReference type="Proteomes" id="UP000002676">
    <property type="component" value="Chromosome"/>
</dbReference>
<dbReference type="GO" id="GO:0005886">
    <property type="term" value="C:plasma membrane"/>
    <property type="evidence" value="ECO:0007669"/>
    <property type="project" value="UniProtKB-SubCell"/>
</dbReference>
<dbReference type="GO" id="GO:0008381">
    <property type="term" value="F:mechanosensitive monoatomic ion channel activity"/>
    <property type="evidence" value="ECO:0007669"/>
    <property type="project" value="UniProtKB-UniRule"/>
</dbReference>
<dbReference type="Gene3D" id="1.10.1200.120">
    <property type="entry name" value="Large-conductance mechanosensitive channel, MscL, domain 1"/>
    <property type="match status" value="1"/>
</dbReference>
<dbReference type="HAMAP" id="MF_00115">
    <property type="entry name" value="MscL"/>
    <property type="match status" value="1"/>
</dbReference>
<dbReference type="InterPro" id="IPR001185">
    <property type="entry name" value="MS_channel"/>
</dbReference>
<dbReference type="InterPro" id="IPR037673">
    <property type="entry name" value="MSC/AndL"/>
</dbReference>
<dbReference type="InterPro" id="IPR036019">
    <property type="entry name" value="MscL_channel"/>
</dbReference>
<dbReference type="NCBIfam" id="TIGR00220">
    <property type="entry name" value="mscL"/>
    <property type="match status" value="1"/>
</dbReference>
<dbReference type="NCBIfam" id="NF001843">
    <property type="entry name" value="PRK00567.1-4"/>
    <property type="match status" value="1"/>
</dbReference>
<dbReference type="NCBIfam" id="NF010557">
    <property type="entry name" value="PRK13952.1"/>
    <property type="match status" value="1"/>
</dbReference>
<dbReference type="PANTHER" id="PTHR30266:SF2">
    <property type="entry name" value="LARGE-CONDUCTANCE MECHANOSENSITIVE CHANNEL"/>
    <property type="match status" value="1"/>
</dbReference>
<dbReference type="PANTHER" id="PTHR30266">
    <property type="entry name" value="MECHANOSENSITIVE CHANNEL MSCL"/>
    <property type="match status" value="1"/>
</dbReference>
<dbReference type="Pfam" id="PF01741">
    <property type="entry name" value="MscL"/>
    <property type="match status" value="1"/>
</dbReference>
<dbReference type="PRINTS" id="PR01264">
    <property type="entry name" value="MECHCHANNEL"/>
</dbReference>
<dbReference type="SUPFAM" id="SSF81330">
    <property type="entry name" value="Gated mechanosensitive channel"/>
    <property type="match status" value="1"/>
</dbReference>
<organism>
    <name type="scientific">Bordetella pertussis (strain Tohama I / ATCC BAA-589 / NCTC 13251)</name>
    <dbReference type="NCBI Taxonomy" id="257313"/>
    <lineage>
        <taxon>Bacteria</taxon>
        <taxon>Pseudomonadati</taxon>
        <taxon>Pseudomonadota</taxon>
        <taxon>Betaproteobacteria</taxon>
        <taxon>Burkholderiales</taxon>
        <taxon>Alcaligenaceae</taxon>
        <taxon>Bordetella</taxon>
    </lineage>
</organism>
<comment type="function">
    <text evidence="1">Channel that opens in response to stretch forces in the membrane lipid bilayer. May participate in the regulation of osmotic pressure changes within the cell.</text>
</comment>
<comment type="subunit">
    <text evidence="1">Homopentamer.</text>
</comment>
<comment type="subcellular location">
    <subcellularLocation>
        <location evidence="1">Cell inner membrane</location>
        <topology evidence="1">Multi-pass membrane protein</topology>
    </subcellularLocation>
</comment>
<comment type="similarity">
    <text evidence="1">Belongs to the MscL family.</text>
</comment>
<keyword id="KW-0997">Cell inner membrane</keyword>
<keyword id="KW-1003">Cell membrane</keyword>
<keyword id="KW-0407">Ion channel</keyword>
<keyword id="KW-0406">Ion transport</keyword>
<keyword id="KW-0472">Membrane</keyword>
<keyword id="KW-1185">Reference proteome</keyword>
<keyword id="KW-0812">Transmembrane</keyword>
<keyword id="KW-1133">Transmembrane helix</keyword>
<keyword id="KW-0813">Transport</keyword>
<proteinExistence type="inferred from homology"/>
<evidence type="ECO:0000255" key="1">
    <source>
        <dbReference type="HAMAP-Rule" id="MF_00115"/>
    </source>
</evidence>
<sequence>MSKATGFIKEFRDFAVKGNAIDLAVGVIIGAAFGKIVDSLVKDVVMPLVNFILGGSVDFSNKFLVLSMPDGYTGPMTYADLTKAGANVLAWGNFITIIINFVLLAFVIFWMVKAIYFARRKEEAAPEAPAAPPEDVTVLREIRDLLKDKQGS</sequence>
<feature type="chain" id="PRO_0000237983" description="Large-conductance mechanosensitive channel">
    <location>
        <begin position="1"/>
        <end position="152"/>
    </location>
</feature>
<feature type="transmembrane region" description="Helical" evidence="1">
    <location>
        <begin position="21"/>
        <end position="41"/>
    </location>
</feature>
<feature type="transmembrane region" description="Helical" evidence="1">
    <location>
        <begin position="44"/>
        <end position="64"/>
    </location>
</feature>
<feature type="transmembrane region" description="Helical" evidence="1">
    <location>
        <begin position="92"/>
        <end position="112"/>
    </location>
</feature>
<name>MSCL_BORPE</name>
<reference key="1">
    <citation type="journal article" date="2003" name="Nat. Genet.">
        <title>Comparative analysis of the genome sequences of Bordetella pertussis, Bordetella parapertussis and Bordetella bronchiseptica.</title>
        <authorList>
            <person name="Parkhill J."/>
            <person name="Sebaihia M."/>
            <person name="Preston A."/>
            <person name="Murphy L.D."/>
            <person name="Thomson N.R."/>
            <person name="Harris D.E."/>
            <person name="Holden M.T.G."/>
            <person name="Churcher C.M."/>
            <person name="Bentley S.D."/>
            <person name="Mungall K.L."/>
            <person name="Cerdeno-Tarraga A.-M."/>
            <person name="Temple L."/>
            <person name="James K.D."/>
            <person name="Harris B."/>
            <person name="Quail M.A."/>
            <person name="Achtman M."/>
            <person name="Atkin R."/>
            <person name="Baker S."/>
            <person name="Basham D."/>
            <person name="Bason N."/>
            <person name="Cherevach I."/>
            <person name="Chillingworth T."/>
            <person name="Collins M."/>
            <person name="Cronin A."/>
            <person name="Davis P."/>
            <person name="Doggett J."/>
            <person name="Feltwell T."/>
            <person name="Goble A."/>
            <person name="Hamlin N."/>
            <person name="Hauser H."/>
            <person name="Holroyd S."/>
            <person name="Jagels K."/>
            <person name="Leather S."/>
            <person name="Moule S."/>
            <person name="Norberczak H."/>
            <person name="O'Neil S."/>
            <person name="Ormond D."/>
            <person name="Price C."/>
            <person name="Rabbinowitsch E."/>
            <person name="Rutter S."/>
            <person name="Sanders M."/>
            <person name="Saunders D."/>
            <person name="Seeger K."/>
            <person name="Sharp S."/>
            <person name="Simmonds M."/>
            <person name="Skelton J."/>
            <person name="Squares R."/>
            <person name="Squares S."/>
            <person name="Stevens K."/>
            <person name="Unwin L."/>
            <person name="Whitehead S."/>
            <person name="Barrell B.G."/>
            <person name="Maskell D.J."/>
        </authorList>
    </citation>
    <scope>NUCLEOTIDE SEQUENCE [LARGE SCALE GENOMIC DNA]</scope>
    <source>
        <strain>Tohama I / ATCC BAA-589 / NCTC 13251</strain>
    </source>
</reference>
<accession>Q7W079</accession>